<accession>Q1CGK4</accession>
<accession>C4GVN0</accession>
<protein>
    <recommendedName>
        <fullName evidence="1">3-hydroxydecanoyl-[acyl-carrier-protein] dehydratase</fullName>
        <ecNumber evidence="1">4.2.1.59</ecNumber>
    </recommendedName>
    <alternativeName>
        <fullName evidence="1">3-hydroxyacyl-[acyl-carrier-protein] dehydratase FabA</fullName>
    </alternativeName>
    <alternativeName>
        <fullName evidence="1">Beta-hydroxydecanoyl thioester dehydrase</fullName>
    </alternativeName>
    <alternativeName>
        <fullName evidence="1">Trans-2-decenoyl-[acyl-carrier-protein] isomerase</fullName>
        <ecNumber evidence="1">5.3.3.14</ecNumber>
    </alternativeName>
</protein>
<comment type="function">
    <text evidence="1">Necessary for the introduction of cis unsaturation into fatty acids. Catalyzes the dehydration of (3R)-3-hydroxydecanoyl-ACP to E-(2)-decenoyl-ACP and then its isomerization to Z-(3)-decenoyl-ACP. Can catalyze the dehydratase reaction for beta-hydroxyacyl-ACPs with saturated chain lengths up to 16:0, being most active on intermediate chain length.</text>
</comment>
<comment type="catalytic activity">
    <reaction evidence="1">
        <text>a (3R)-hydroxyacyl-[ACP] = a (2E)-enoyl-[ACP] + H2O</text>
        <dbReference type="Rhea" id="RHEA:13097"/>
        <dbReference type="Rhea" id="RHEA-COMP:9925"/>
        <dbReference type="Rhea" id="RHEA-COMP:9945"/>
        <dbReference type="ChEBI" id="CHEBI:15377"/>
        <dbReference type="ChEBI" id="CHEBI:78784"/>
        <dbReference type="ChEBI" id="CHEBI:78827"/>
        <dbReference type="EC" id="4.2.1.59"/>
    </reaction>
</comment>
<comment type="catalytic activity">
    <reaction evidence="1">
        <text>(3R)-hydroxydecanoyl-[ACP] = (2E)-decenoyl-[ACP] + H2O</text>
        <dbReference type="Rhea" id="RHEA:41860"/>
        <dbReference type="Rhea" id="RHEA-COMP:9638"/>
        <dbReference type="Rhea" id="RHEA-COMP:9639"/>
        <dbReference type="ChEBI" id="CHEBI:15377"/>
        <dbReference type="ChEBI" id="CHEBI:78466"/>
        <dbReference type="ChEBI" id="CHEBI:78467"/>
    </reaction>
</comment>
<comment type="catalytic activity">
    <reaction evidence="1">
        <text>(2E)-decenoyl-[ACP] = (3Z)-decenoyl-[ACP]</text>
        <dbReference type="Rhea" id="RHEA:23568"/>
        <dbReference type="Rhea" id="RHEA-COMP:9639"/>
        <dbReference type="Rhea" id="RHEA-COMP:9927"/>
        <dbReference type="ChEBI" id="CHEBI:78467"/>
        <dbReference type="ChEBI" id="CHEBI:78798"/>
        <dbReference type="EC" id="5.3.3.14"/>
    </reaction>
</comment>
<comment type="pathway">
    <text evidence="1">Lipid metabolism; fatty acid biosynthesis.</text>
</comment>
<comment type="subunit">
    <text evidence="1">Homodimer.</text>
</comment>
<comment type="subcellular location">
    <subcellularLocation>
        <location evidence="1">Cytoplasm</location>
    </subcellularLocation>
</comment>
<comment type="similarity">
    <text evidence="1">Belongs to the thioester dehydratase family. FabA subfamily.</text>
</comment>
<comment type="sequence caution" evidence="2">
    <conflict type="erroneous initiation">
        <sequence resource="EMBL-CDS" id="ABG18876"/>
    </conflict>
</comment>
<evidence type="ECO:0000255" key="1">
    <source>
        <dbReference type="HAMAP-Rule" id="MF_00405"/>
    </source>
</evidence>
<evidence type="ECO:0000305" key="2"/>
<dbReference type="EC" id="4.2.1.59" evidence="1"/>
<dbReference type="EC" id="5.3.3.14" evidence="1"/>
<dbReference type="EMBL" id="CP000305">
    <property type="protein sequence ID" value="ABG18876.1"/>
    <property type="status" value="ALT_INIT"/>
    <property type="molecule type" value="Genomic_DNA"/>
</dbReference>
<dbReference type="EMBL" id="ACNQ01000016">
    <property type="protein sequence ID" value="EEO75950.1"/>
    <property type="molecule type" value="Genomic_DNA"/>
</dbReference>
<dbReference type="RefSeq" id="WP_002220006.1">
    <property type="nucleotide sequence ID" value="NZ_ACNQ01000016.1"/>
</dbReference>
<dbReference type="SMR" id="Q1CGK4"/>
<dbReference type="GeneID" id="57977132"/>
<dbReference type="KEGG" id="ypn:YPN_2548"/>
<dbReference type="HOGENOM" id="CLU_097925_0_0_6"/>
<dbReference type="UniPathway" id="UPA00094"/>
<dbReference type="Proteomes" id="UP000008936">
    <property type="component" value="Chromosome"/>
</dbReference>
<dbReference type="GO" id="GO:0005737">
    <property type="term" value="C:cytoplasm"/>
    <property type="evidence" value="ECO:0007669"/>
    <property type="project" value="UniProtKB-SubCell"/>
</dbReference>
<dbReference type="GO" id="GO:0019171">
    <property type="term" value="F:(3R)-hydroxyacyl-[acyl-carrier-protein] dehydratase activity"/>
    <property type="evidence" value="ECO:0007669"/>
    <property type="project" value="UniProtKB-UniRule"/>
</dbReference>
<dbReference type="GO" id="GO:0034017">
    <property type="term" value="F:trans-2-decenoyl-acyl-carrier-protein isomerase activity"/>
    <property type="evidence" value="ECO:0007669"/>
    <property type="project" value="UniProtKB-UniRule"/>
</dbReference>
<dbReference type="GO" id="GO:0006636">
    <property type="term" value="P:unsaturated fatty acid biosynthetic process"/>
    <property type="evidence" value="ECO:0007669"/>
    <property type="project" value="UniProtKB-UniRule"/>
</dbReference>
<dbReference type="CDD" id="cd01287">
    <property type="entry name" value="FabA"/>
    <property type="match status" value="1"/>
</dbReference>
<dbReference type="FunFam" id="3.10.129.10:FF:000003">
    <property type="entry name" value="3-hydroxydecanoyl-[acyl-carrier-protein] dehydratase"/>
    <property type="match status" value="1"/>
</dbReference>
<dbReference type="Gene3D" id="3.10.129.10">
    <property type="entry name" value="Hotdog Thioesterase"/>
    <property type="match status" value="1"/>
</dbReference>
<dbReference type="HAMAP" id="MF_00405">
    <property type="entry name" value="FabA"/>
    <property type="match status" value="1"/>
</dbReference>
<dbReference type="InterPro" id="IPR010083">
    <property type="entry name" value="FabA"/>
</dbReference>
<dbReference type="InterPro" id="IPR013114">
    <property type="entry name" value="FabA_FabZ"/>
</dbReference>
<dbReference type="InterPro" id="IPR029069">
    <property type="entry name" value="HotDog_dom_sf"/>
</dbReference>
<dbReference type="NCBIfam" id="TIGR01749">
    <property type="entry name" value="fabA"/>
    <property type="match status" value="1"/>
</dbReference>
<dbReference type="NCBIfam" id="NF003509">
    <property type="entry name" value="PRK05174.1"/>
    <property type="match status" value="1"/>
</dbReference>
<dbReference type="PANTHER" id="PTHR30272">
    <property type="entry name" value="3-HYDROXYACYL-[ACYL-CARRIER-PROTEIN] DEHYDRATASE"/>
    <property type="match status" value="1"/>
</dbReference>
<dbReference type="PANTHER" id="PTHR30272:SF8">
    <property type="entry name" value="3-HYDROXYDECANOYL-[ACYL-CARRIER-PROTEIN] DEHYDRATASE"/>
    <property type="match status" value="1"/>
</dbReference>
<dbReference type="Pfam" id="PF07977">
    <property type="entry name" value="FabA"/>
    <property type="match status" value="1"/>
</dbReference>
<dbReference type="SUPFAM" id="SSF54637">
    <property type="entry name" value="Thioesterase/thiol ester dehydrase-isomerase"/>
    <property type="match status" value="1"/>
</dbReference>
<organism>
    <name type="scientific">Yersinia pestis bv. Antiqua (strain Nepal516)</name>
    <dbReference type="NCBI Taxonomy" id="377628"/>
    <lineage>
        <taxon>Bacteria</taxon>
        <taxon>Pseudomonadati</taxon>
        <taxon>Pseudomonadota</taxon>
        <taxon>Gammaproteobacteria</taxon>
        <taxon>Enterobacterales</taxon>
        <taxon>Yersiniaceae</taxon>
        <taxon>Yersinia</taxon>
    </lineage>
</organism>
<feature type="chain" id="PRO_0000267765" description="3-hydroxydecanoyl-[acyl-carrier-protein] dehydratase">
    <location>
        <begin position="1"/>
        <end position="172"/>
    </location>
</feature>
<feature type="active site" evidence="1">
    <location>
        <position position="71"/>
    </location>
</feature>
<name>FABA_YERPN</name>
<proteinExistence type="inferred from homology"/>
<gene>
    <name evidence="1" type="primary">fabA</name>
    <name type="ordered locus">YPN_2548</name>
    <name type="ORF">YP516_2863</name>
</gene>
<sequence length="172" mass="18810">MVDKRESYTKEDLEASGRGELFGAGGPPLPAGNMLMMDRIVKMIEDGGSHNKGYVEAELDINPDLWFFGCHFIGDPVMPGCLGLDAMWQLVGFYLGWLGGEGKGRALGVGEVKFTGQVLPDAKKVTYRINFKRVIMRKLIMGVADGEVLVDGKVIYTATDLKVGLFKDTNAF</sequence>
<reference key="1">
    <citation type="journal article" date="2006" name="J. Bacteriol.">
        <title>Complete genome sequence of Yersinia pestis strains Antiqua and Nepal516: evidence of gene reduction in an emerging pathogen.</title>
        <authorList>
            <person name="Chain P.S.G."/>
            <person name="Hu P."/>
            <person name="Malfatti S.A."/>
            <person name="Radnedge L."/>
            <person name="Larimer F."/>
            <person name="Vergez L.M."/>
            <person name="Worsham P."/>
            <person name="Chu M.C."/>
            <person name="Andersen G.L."/>
        </authorList>
    </citation>
    <scope>NUCLEOTIDE SEQUENCE [LARGE SCALE GENOMIC DNA]</scope>
    <source>
        <strain>Nepal516</strain>
    </source>
</reference>
<reference key="2">
    <citation type="submission" date="2009-04" db="EMBL/GenBank/DDBJ databases">
        <title>Yersinia pestis Nepal516A whole genome shotgun sequencing project.</title>
        <authorList>
            <person name="Plunkett G. III"/>
            <person name="Anderson B.D."/>
            <person name="Baumler D.J."/>
            <person name="Burland V."/>
            <person name="Cabot E.L."/>
            <person name="Glasner J.D."/>
            <person name="Mau B."/>
            <person name="Neeno-Eckwall E."/>
            <person name="Perna N.T."/>
            <person name="Munk A.C."/>
            <person name="Tapia R."/>
            <person name="Green L.D."/>
            <person name="Rogers Y.C."/>
            <person name="Detter J.C."/>
            <person name="Bruce D.C."/>
            <person name="Brettin T.S."/>
        </authorList>
    </citation>
    <scope>NUCLEOTIDE SEQUENCE [LARGE SCALE GENOMIC DNA]</scope>
    <source>
        <strain>Nepal516</strain>
    </source>
</reference>
<keyword id="KW-0963">Cytoplasm</keyword>
<keyword id="KW-0275">Fatty acid biosynthesis</keyword>
<keyword id="KW-0276">Fatty acid metabolism</keyword>
<keyword id="KW-0413">Isomerase</keyword>
<keyword id="KW-0444">Lipid biosynthesis</keyword>
<keyword id="KW-0443">Lipid metabolism</keyword>
<keyword id="KW-0456">Lyase</keyword>